<dbReference type="EMBL" id="AF238077">
    <property type="protein sequence ID" value="AAQ14236.1"/>
    <property type="molecule type" value="Genomic_DNA"/>
</dbReference>
<dbReference type="SMR" id="Q6KGV8"/>
<dbReference type="GO" id="GO:0009507">
    <property type="term" value="C:chloroplast"/>
    <property type="evidence" value="ECO:0007669"/>
    <property type="project" value="UniProtKB-SubCell"/>
</dbReference>
<dbReference type="GO" id="GO:0015935">
    <property type="term" value="C:small ribosomal subunit"/>
    <property type="evidence" value="ECO:0007669"/>
    <property type="project" value="InterPro"/>
</dbReference>
<dbReference type="GO" id="GO:0019843">
    <property type="term" value="F:rRNA binding"/>
    <property type="evidence" value="ECO:0007669"/>
    <property type="project" value="UniProtKB-UniRule"/>
</dbReference>
<dbReference type="GO" id="GO:0003735">
    <property type="term" value="F:structural constituent of ribosome"/>
    <property type="evidence" value="ECO:0007669"/>
    <property type="project" value="InterPro"/>
</dbReference>
<dbReference type="GO" id="GO:0006412">
    <property type="term" value="P:translation"/>
    <property type="evidence" value="ECO:0007669"/>
    <property type="project" value="UniProtKB-UniRule"/>
</dbReference>
<dbReference type="CDD" id="cd14871">
    <property type="entry name" value="uS7_Chloroplast"/>
    <property type="match status" value="1"/>
</dbReference>
<dbReference type="FunFam" id="1.10.455.10:FF:000001">
    <property type="entry name" value="30S ribosomal protein S7"/>
    <property type="match status" value="1"/>
</dbReference>
<dbReference type="Gene3D" id="1.10.455.10">
    <property type="entry name" value="Ribosomal protein S7 domain"/>
    <property type="match status" value="1"/>
</dbReference>
<dbReference type="HAMAP" id="MF_00480_B">
    <property type="entry name" value="Ribosomal_uS7_B"/>
    <property type="match status" value="1"/>
</dbReference>
<dbReference type="InterPro" id="IPR000235">
    <property type="entry name" value="Ribosomal_uS7"/>
</dbReference>
<dbReference type="InterPro" id="IPR005717">
    <property type="entry name" value="Ribosomal_uS7_bac/org-type"/>
</dbReference>
<dbReference type="InterPro" id="IPR020606">
    <property type="entry name" value="Ribosomal_uS7_CS"/>
</dbReference>
<dbReference type="InterPro" id="IPR023798">
    <property type="entry name" value="Ribosomal_uS7_dom"/>
</dbReference>
<dbReference type="InterPro" id="IPR036823">
    <property type="entry name" value="Ribosomal_uS7_dom_sf"/>
</dbReference>
<dbReference type="NCBIfam" id="TIGR01029">
    <property type="entry name" value="rpsG_bact"/>
    <property type="match status" value="1"/>
</dbReference>
<dbReference type="PANTHER" id="PTHR11205">
    <property type="entry name" value="RIBOSOMAL PROTEIN S7"/>
    <property type="match status" value="1"/>
</dbReference>
<dbReference type="Pfam" id="PF00177">
    <property type="entry name" value="Ribosomal_S7"/>
    <property type="match status" value="1"/>
</dbReference>
<dbReference type="PIRSF" id="PIRSF002122">
    <property type="entry name" value="RPS7p_RPS7a_RPS5e_RPS7o"/>
    <property type="match status" value="1"/>
</dbReference>
<dbReference type="SUPFAM" id="SSF47973">
    <property type="entry name" value="Ribosomal protein S7"/>
    <property type="match status" value="1"/>
</dbReference>
<dbReference type="PROSITE" id="PS00052">
    <property type="entry name" value="RIBOSOMAL_S7"/>
    <property type="match status" value="1"/>
</dbReference>
<protein>
    <recommendedName>
        <fullName evidence="2">Small ribosomal subunit protein uS7c</fullName>
    </recommendedName>
    <alternativeName>
        <fullName>30S ribosomal protein S7, chloroplastic</fullName>
    </alternativeName>
</protein>
<evidence type="ECO:0000250" key="1"/>
<evidence type="ECO:0000305" key="2"/>
<organism>
    <name type="scientific">Spathiphyllum wallisii</name>
    <name type="common">Peace lily</name>
    <dbReference type="NCBI Taxonomy" id="85269"/>
    <lineage>
        <taxon>Eukaryota</taxon>
        <taxon>Viridiplantae</taxon>
        <taxon>Streptophyta</taxon>
        <taxon>Embryophyta</taxon>
        <taxon>Tracheophyta</taxon>
        <taxon>Spermatophyta</taxon>
        <taxon>Magnoliopsida</taxon>
        <taxon>Liliopsida</taxon>
        <taxon>Araceae</taxon>
        <taxon>Pothoideae</taxon>
        <taxon>Monstereae</taxon>
        <taxon>Spathiphyllum</taxon>
    </lineage>
</organism>
<feature type="chain" id="PRO_0000124507" description="Small ribosomal subunit protein uS7c">
    <location>
        <begin position="1"/>
        <end position="155"/>
    </location>
</feature>
<reference key="1">
    <citation type="submission" date="2000-02" db="EMBL/GenBank/DDBJ databases">
        <authorList>
            <person name="Graham S.W."/>
            <person name="Reeves P.A."/>
            <person name="Burns A."/>
            <person name="Olmstead R.G."/>
        </authorList>
    </citation>
    <scope>NUCLEOTIDE SEQUENCE [GENOMIC DNA]</scope>
</reference>
<proteinExistence type="inferred from homology"/>
<comment type="function">
    <text evidence="1">One of the primary rRNA binding proteins, it binds directly to 16S rRNA where it nucleates assembly of the head domain of the 30S subunit.</text>
</comment>
<comment type="subunit">
    <text>Part of the 30S ribosomal subunit.</text>
</comment>
<comment type="subcellular location">
    <subcellularLocation>
        <location>Plastid</location>
        <location>Chloroplast</location>
    </subcellularLocation>
</comment>
<comment type="similarity">
    <text evidence="2">Belongs to the universal ribosomal protein uS7 family.</text>
</comment>
<sequence length="155" mass="17314">MSRRGTAEKKTAKSDPIYRNRLVNMLVNRILKHGKKSLAYQIIYRAVKKIQQKTETNPLSVLRQAIRGVTPDIAVKARRVGGSTHQVPIEIGSTQGKALAIRWLLGASRKRPGRNMAFKLSSELVDAAKGSGDAIRKKEETHKMAEANRAFAHFR</sequence>
<name>RR7_SPAWA</name>
<gene>
    <name type="primary">rps7</name>
</gene>
<geneLocation type="chloroplast"/>
<accession>Q6KGV8</accession>
<keyword id="KW-0150">Chloroplast</keyword>
<keyword id="KW-0934">Plastid</keyword>
<keyword id="KW-0687">Ribonucleoprotein</keyword>
<keyword id="KW-0689">Ribosomal protein</keyword>
<keyword id="KW-0694">RNA-binding</keyword>
<keyword id="KW-0699">rRNA-binding</keyword>